<reference key="1">
    <citation type="journal article" date="1992" name="Virus Res.">
        <title>Complete genomic sequences of the GP5 protein gene of bluetongue virus serotype 11 and 17.</title>
        <authorList>
            <person name="Yang Y.-Y."/>
            <person name="Li J.K.-K."/>
        </authorList>
    </citation>
    <scope>NUCLEOTIDE SEQUENCE [GENOMIC RNA]</scope>
</reference>
<accession>P69364</accession>
<accession>P33430</accession>
<accession>P33476</accession>
<evidence type="ECO:0000250" key="1"/>
<evidence type="ECO:0000305" key="2"/>
<organismHost>
    <name type="scientific">Antilocapra americana</name>
    <name type="common">Pronghorn</name>
    <dbReference type="NCBI Taxonomy" id="9891"/>
</organismHost>
<organismHost>
    <name type="scientific">Bos taurus</name>
    <name type="common">Bovine</name>
    <dbReference type="NCBI Taxonomy" id="9913"/>
</organismHost>
<organismHost>
    <name type="scientific">Capra hircus</name>
    <name type="common">Goat</name>
    <dbReference type="NCBI Taxonomy" id="9925"/>
</organismHost>
<organismHost>
    <name type="scientific">Culicoides variipennis</name>
    <name type="common">Biting midge</name>
    <dbReference type="NCBI Taxonomy" id="46212"/>
</organismHost>
<organismHost>
    <name type="scientific">Ovis aries</name>
    <name type="common">Sheep</name>
    <dbReference type="NCBI Taxonomy" id="9940"/>
</organismHost>
<proteinExistence type="inferred from homology"/>
<keyword id="KW-0167">Capsid protein</keyword>
<keyword id="KW-1152">Outer capsid protein</keyword>
<keyword id="KW-1162">Viral penetration into host cytoplasm</keyword>
<keyword id="KW-1173">Viral penetration via permeabilization of host membrane</keyword>
<keyword id="KW-0946">Virion</keyword>
<keyword id="KW-1160">Virus entry into host cell</keyword>
<dbReference type="EMBL" id="X55359">
    <property type="protein sequence ID" value="CAA39043.1"/>
    <property type="molecule type" value="Genomic_RNA"/>
</dbReference>
<dbReference type="SMR" id="P69364"/>
<dbReference type="GO" id="GO:0039624">
    <property type="term" value="C:viral outer capsid"/>
    <property type="evidence" value="ECO:0007669"/>
    <property type="project" value="UniProtKB-KW"/>
</dbReference>
<dbReference type="GO" id="GO:0005198">
    <property type="term" value="F:structural molecule activity"/>
    <property type="evidence" value="ECO:0007669"/>
    <property type="project" value="InterPro"/>
</dbReference>
<dbReference type="GO" id="GO:0140267">
    <property type="term" value="P:symbiont entry into host cell via permeabilization of host membrane"/>
    <property type="evidence" value="ECO:0007669"/>
    <property type="project" value="UniProtKB-KW"/>
</dbReference>
<dbReference type="InterPro" id="IPR000145">
    <property type="entry name" value="Capsid_VP5_Orbivir"/>
</dbReference>
<dbReference type="Pfam" id="PF00901">
    <property type="entry name" value="Orbi_VP5"/>
    <property type="match status" value="1"/>
</dbReference>
<gene>
    <name type="primary">Segment-6</name>
    <name type="synonym">M3</name>
</gene>
<sequence>MGKIIKSLSRFGKKVGNALTSNTAKKIYSTIGKAAERFAESEIGAATIDGLVQGSVHSIITGESYGESVKQAVLLNVLGTGEELPDPLSPGERGIQTKIKELEDEQRNELVRLKYNKEITKEFGKELEEVYDFMNGEAKEEEVVQEQYSMLCKAVDSYEKILKAEDSKMAMLARALQREASERSQDEIKMVKEYRQKIDALKNAIEIERDGMQEEAIQEIAGMTADVLEAASEEVPLIGAGMATAVATGRAIEGAYKLKKVINALSGIDLSHMRSPKIEPTIIATTLEHRFKEIPDEQLAVSVLNKKTAVTDNCNEIAHIKQEILPKFKQIMDEEKEIEGIEDKVIHPRVMMRFKIPRTQQPQIHIYAAPWDSDDVFFFHCVSHHHRNESFFLGFDLGIDVVHFEDLTSHWHALGLAQEASGRTLTEAYREFLNLSISSTYSSAIHARRMIRSRAVHPIFLGSMHYDITYEALKNNAQRIVYDEELQMHILRGPLHFQRRAILGALKFGVKILGDKIDVPLFLRNA</sequence>
<feature type="chain" id="PRO_0000222715" description="Outer capsid protein VP5">
    <location>
        <begin position="1"/>
        <end position="526"/>
    </location>
</feature>
<feature type="region of interest" description="Involved in membrane permeabilization" evidence="1">
    <location>
        <begin position="1"/>
        <end position="42"/>
    </location>
</feature>
<organism>
    <name type="scientific">Bluetongue virus 17 (isolate USA)</name>
    <name type="common">BTV 17</name>
    <dbReference type="NCBI Taxonomy" id="33718"/>
    <lineage>
        <taxon>Viruses</taxon>
        <taxon>Riboviria</taxon>
        <taxon>Orthornavirae</taxon>
        <taxon>Duplornaviricota</taxon>
        <taxon>Resentoviricetes</taxon>
        <taxon>Reovirales</taxon>
        <taxon>Sedoreoviridae</taxon>
        <taxon>Orbivirus</taxon>
        <taxon>Bluetongue virus</taxon>
    </lineage>
</organism>
<name>VP5_BTV17</name>
<protein>
    <recommendedName>
        <fullName>Outer capsid protein VP5</fullName>
    </recommendedName>
</protein>
<comment type="function">
    <text evidence="1">VP5 protein is one of the two proteins (with VP2) which constitute the virus particle outer capsid. Acts as a membrane permeabilization protein that mediates release of viral particles from endosomal compartments into the cytoplasm. Permeabilization activity is probably negatively regulated by VP2 and is triggered by endosomal degradation of VP2 and exposure to low pH (By similarity).</text>
</comment>
<comment type="subcellular location">
    <subcellularLocation>
        <location evidence="2">Virion</location>
    </subcellularLocation>
</comment>
<comment type="similarity">
    <text evidence="2">Belongs to the orbivirus VP5 family.</text>
</comment>